<organism>
    <name type="scientific">Escherichia coli O7:K1 (strain IAI39 / ExPEC)</name>
    <dbReference type="NCBI Taxonomy" id="585057"/>
    <lineage>
        <taxon>Bacteria</taxon>
        <taxon>Pseudomonadati</taxon>
        <taxon>Pseudomonadota</taxon>
        <taxon>Gammaproteobacteria</taxon>
        <taxon>Enterobacterales</taxon>
        <taxon>Enterobacteriaceae</taxon>
        <taxon>Escherichia</taxon>
    </lineage>
</organism>
<accession>B7NS44</accession>
<dbReference type="EMBL" id="CU928164">
    <property type="protein sequence ID" value="CAR17309.1"/>
    <property type="molecule type" value="Genomic_DNA"/>
</dbReference>
<dbReference type="RefSeq" id="WP_001185732.1">
    <property type="nucleotide sequence ID" value="NC_011750.1"/>
</dbReference>
<dbReference type="RefSeq" id="YP_002407183.1">
    <property type="nucleotide sequence ID" value="NC_011750.1"/>
</dbReference>
<dbReference type="SMR" id="B7NS44"/>
<dbReference type="STRING" id="585057.ECIAI39_1175"/>
<dbReference type="KEGG" id="ect:ECIAI39_1175"/>
<dbReference type="PATRIC" id="fig|585057.6.peg.1232"/>
<dbReference type="HOGENOM" id="CLU_050555_3_1_6"/>
<dbReference type="Proteomes" id="UP000000749">
    <property type="component" value="Chromosome"/>
</dbReference>
<dbReference type="GO" id="GO:0005737">
    <property type="term" value="C:cytoplasm"/>
    <property type="evidence" value="ECO:0007669"/>
    <property type="project" value="UniProtKB-SubCell"/>
</dbReference>
<dbReference type="GO" id="GO:0005507">
    <property type="term" value="F:copper ion binding"/>
    <property type="evidence" value="ECO:0007669"/>
    <property type="project" value="TreeGrafter"/>
</dbReference>
<dbReference type="FunFam" id="3.20.20.380:FF:000001">
    <property type="entry name" value="Copper homeostasis protein CutC"/>
    <property type="match status" value="1"/>
</dbReference>
<dbReference type="Gene3D" id="3.20.20.380">
    <property type="entry name" value="Copper homeostasis (CutC) domain"/>
    <property type="match status" value="1"/>
</dbReference>
<dbReference type="HAMAP" id="MF_00795">
    <property type="entry name" value="CutC"/>
    <property type="match status" value="1"/>
</dbReference>
<dbReference type="InterPro" id="IPR005627">
    <property type="entry name" value="CutC-like"/>
</dbReference>
<dbReference type="InterPro" id="IPR036822">
    <property type="entry name" value="CutC-like_dom_sf"/>
</dbReference>
<dbReference type="NCBIfam" id="NF008603">
    <property type="entry name" value="PRK11572.1"/>
    <property type="match status" value="1"/>
</dbReference>
<dbReference type="PANTHER" id="PTHR12598">
    <property type="entry name" value="COPPER HOMEOSTASIS PROTEIN CUTC"/>
    <property type="match status" value="1"/>
</dbReference>
<dbReference type="PANTHER" id="PTHR12598:SF0">
    <property type="entry name" value="COPPER HOMEOSTASIS PROTEIN CUTC HOMOLOG"/>
    <property type="match status" value="1"/>
</dbReference>
<dbReference type="Pfam" id="PF03932">
    <property type="entry name" value="CutC"/>
    <property type="match status" value="1"/>
</dbReference>
<dbReference type="SUPFAM" id="SSF110395">
    <property type="entry name" value="CutC-like"/>
    <property type="match status" value="1"/>
</dbReference>
<feature type="chain" id="PRO_1000133832" description="PF03932 family protein CutC">
    <location>
        <begin position="1"/>
        <end position="248"/>
    </location>
</feature>
<keyword id="KW-0963">Cytoplasm</keyword>
<sequence>MALLEICCYSMECALTAQQNGADRVELCAAPKEGGLTPSLGVLKSVRQRVTIPVHPIIRPRGGDFCYSDGEFAAILEDVRTVRELGFPGLVTGVLDVDGNVDMPRMEKIMAAAGPLAVTFHRAFDMCANPLNTLNNLAELGVARVLTSGQKSDALQGLSKIMELIAHGDAPIIMAGAGVRAENLHHFLDAGVLEVHSSAGAWQASPMRYRNQGLSMSSDAHADEYSRYVVDGAAVAEMKGIIERHQAK</sequence>
<evidence type="ECO:0000255" key="1">
    <source>
        <dbReference type="HAMAP-Rule" id="MF_00795"/>
    </source>
</evidence>
<comment type="subunit">
    <text evidence="1">Homodimer.</text>
</comment>
<comment type="subcellular location">
    <subcellularLocation>
        <location evidence="1">Cytoplasm</location>
    </subcellularLocation>
</comment>
<comment type="similarity">
    <text evidence="1">Belongs to the CutC family.</text>
</comment>
<comment type="caution">
    <text evidence="1">Once thought to be involved in copper homeostasis, experiments in E.coli have shown this is not the case.</text>
</comment>
<reference key="1">
    <citation type="journal article" date="2009" name="PLoS Genet.">
        <title>Organised genome dynamics in the Escherichia coli species results in highly diverse adaptive paths.</title>
        <authorList>
            <person name="Touchon M."/>
            <person name="Hoede C."/>
            <person name="Tenaillon O."/>
            <person name="Barbe V."/>
            <person name="Baeriswyl S."/>
            <person name="Bidet P."/>
            <person name="Bingen E."/>
            <person name="Bonacorsi S."/>
            <person name="Bouchier C."/>
            <person name="Bouvet O."/>
            <person name="Calteau A."/>
            <person name="Chiapello H."/>
            <person name="Clermont O."/>
            <person name="Cruveiller S."/>
            <person name="Danchin A."/>
            <person name="Diard M."/>
            <person name="Dossat C."/>
            <person name="Karoui M.E."/>
            <person name="Frapy E."/>
            <person name="Garry L."/>
            <person name="Ghigo J.M."/>
            <person name="Gilles A.M."/>
            <person name="Johnson J."/>
            <person name="Le Bouguenec C."/>
            <person name="Lescat M."/>
            <person name="Mangenot S."/>
            <person name="Martinez-Jehanne V."/>
            <person name="Matic I."/>
            <person name="Nassif X."/>
            <person name="Oztas S."/>
            <person name="Petit M.A."/>
            <person name="Pichon C."/>
            <person name="Rouy Z."/>
            <person name="Ruf C.S."/>
            <person name="Schneider D."/>
            <person name="Tourret J."/>
            <person name="Vacherie B."/>
            <person name="Vallenet D."/>
            <person name="Medigue C."/>
            <person name="Rocha E.P.C."/>
            <person name="Denamur E."/>
        </authorList>
    </citation>
    <scope>NUCLEOTIDE SEQUENCE [LARGE SCALE GENOMIC DNA]</scope>
    <source>
        <strain>IAI39 / ExPEC</strain>
    </source>
</reference>
<name>CUTC_ECO7I</name>
<gene>
    <name evidence="1" type="primary">cutC</name>
    <name type="ordered locus">ECIAI39_1175</name>
</gene>
<protein>
    <recommendedName>
        <fullName evidence="1">PF03932 family protein CutC</fullName>
    </recommendedName>
</protein>
<proteinExistence type="inferred from homology"/>